<accession>A9IRU5</accession>
<keyword id="KW-0687">Ribonucleoprotein</keyword>
<keyword id="KW-0689">Ribosomal protein</keyword>
<keyword id="KW-0694">RNA-binding</keyword>
<keyword id="KW-0699">rRNA-binding</keyword>
<sequence>MALYEHMFLARQDVAPQQVDELLSLYKGVIETHGGKVGRVENWGLRPLAYRIRKNRKAYYVLVNIDAPAAAIAEMERQMRINEDILRYMTIRVEKHEKEKSAMLSHLDRNAHAGQDEERSRSPRRQRENAIERVE</sequence>
<feature type="chain" id="PRO_1000079433" description="Small ribosomal subunit protein bS6">
    <location>
        <begin position="1"/>
        <end position="135"/>
    </location>
</feature>
<feature type="region of interest" description="Disordered" evidence="2">
    <location>
        <begin position="99"/>
        <end position="135"/>
    </location>
</feature>
<reference key="1">
    <citation type="journal article" date="2007" name="Nat. Genet.">
        <title>Genomic analysis of Bartonella identifies type IV secretion systems as host adaptability factors.</title>
        <authorList>
            <person name="Saenz H.L."/>
            <person name="Engel P."/>
            <person name="Stoeckli M.C."/>
            <person name="Lanz C."/>
            <person name="Raddatz G."/>
            <person name="Vayssier-Taussat M."/>
            <person name="Birtles R."/>
            <person name="Schuster S.C."/>
            <person name="Dehio C."/>
        </authorList>
    </citation>
    <scope>NUCLEOTIDE SEQUENCE [LARGE SCALE GENOMIC DNA]</scope>
    <source>
        <strain>CIP 105476 / IBS 506</strain>
    </source>
</reference>
<organism>
    <name type="scientific">Bartonella tribocorum (strain CIP 105476 / IBS 506)</name>
    <dbReference type="NCBI Taxonomy" id="382640"/>
    <lineage>
        <taxon>Bacteria</taxon>
        <taxon>Pseudomonadati</taxon>
        <taxon>Pseudomonadota</taxon>
        <taxon>Alphaproteobacteria</taxon>
        <taxon>Hyphomicrobiales</taxon>
        <taxon>Bartonellaceae</taxon>
        <taxon>Bartonella</taxon>
    </lineage>
</organism>
<name>RS6_BART1</name>
<comment type="function">
    <text evidence="1">Binds together with bS18 to 16S ribosomal RNA.</text>
</comment>
<comment type="similarity">
    <text evidence="1">Belongs to the bacterial ribosomal protein bS6 family.</text>
</comment>
<proteinExistence type="inferred from homology"/>
<protein>
    <recommendedName>
        <fullName evidence="1">Small ribosomal subunit protein bS6</fullName>
    </recommendedName>
    <alternativeName>
        <fullName evidence="3">30S ribosomal protein S6</fullName>
    </alternativeName>
</protein>
<gene>
    <name evidence="1" type="primary">rpsF</name>
    <name type="ordered locus">BT_0814</name>
</gene>
<dbReference type="EMBL" id="AM260525">
    <property type="protein sequence ID" value="CAK01224.1"/>
    <property type="molecule type" value="Genomic_DNA"/>
</dbReference>
<dbReference type="RefSeq" id="WP_012231337.1">
    <property type="nucleotide sequence ID" value="NC_010161.1"/>
</dbReference>
<dbReference type="SMR" id="A9IRU5"/>
<dbReference type="KEGG" id="btr:BT_0814"/>
<dbReference type="eggNOG" id="COG0360">
    <property type="taxonomic scope" value="Bacteria"/>
</dbReference>
<dbReference type="HOGENOM" id="CLU_113441_2_0_5"/>
<dbReference type="Proteomes" id="UP000001592">
    <property type="component" value="Chromosome"/>
</dbReference>
<dbReference type="GO" id="GO:0022627">
    <property type="term" value="C:cytosolic small ribosomal subunit"/>
    <property type="evidence" value="ECO:0007669"/>
    <property type="project" value="TreeGrafter"/>
</dbReference>
<dbReference type="GO" id="GO:0070181">
    <property type="term" value="F:small ribosomal subunit rRNA binding"/>
    <property type="evidence" value="ECO:0007669"/>
    <property type="project" value="TreeGrafter"/>
</dbReference>
<dbReference type="GO" id="GO:0003735">
    <property type="term" value="F:structural constituent of ribosome"/>
    <property type="evidence" value="ECO:0007669"/>
    <property type="project" value="InterPro"/>
</dbReference>
<dbReference type="GO" id="GO:0006412">
    <property type="term" value="P:translation"/>
    <property type="evidence" value="ECO:0007669"/>
    <property type="project" value="UniProtKB-UniRule"/>
</dbReference>
<dbReference type="CDD" id="cd00473">
    <property type="entry name" value="bS6"/>
    <property type="match status" value="1"/>
</dbReference>
<dbReference type="Gene3D" id="3.30.70.60">
    <property type="match status" value="1"/>
</dbReference>
<dbReference type="HAMAP" id="MF_00360">
    <property type="entry name" value="Ribosomal_bS6"/>
    <property type="match status" value="1"/>
</dbReference>
<dbReference type="InterPro" id="IPR000529">
    <property type="entry name" value="Ribosomal_bS6"/>
</dbReference>
<dbReference type="InterPro" id="IPR035980">
    <property type="entry name" value="Ribosomal_bS6_sf"/>
</dbReference>
<dbReference type="InterPro" id="IPR020814">
    <property type="entry name" value="Ribosomal_S6_plastid/chlpt"/>
</dbReference>
<dbReference type="InterPro" id="IPR014717">
    <property type="entry name" value="Transl_elong_EF1B/ribsomal_bS6"/>
</dbReference>
<dbReference type="NCBIfam" id="TIGR00166">
    <property type="entry name" value="S6"/>
    <property type="match status" value="1"/>
</dbReference>
<dbReference type="PANTHER" id="PTHR21011">
    <property type="entry name" value="MITOCHONDRIAL 28S RIBOSOMAL PROTEIN S6"/>
    <property type="match status" value="1"/>
</dbReference>
<dbReference type="PANTHER" id="PTHR21011:SF1">
    <property type="entry name" value="SMALL RIBOSOMAL SUBUNIT PROTEIN BS6M"/>
    <property type="match status" value="1"/>
</dbReference>
<dbReference type="Pfam" id="PF01250">
    <property type="entry name" value="Ribosomal_S6"/>
    <property type="match status" value="1"/>
</dbReference>
<dbReference type="SUPFAM" id="SSF54995">
    <property type="entry name" value="Ribosomal protein S6"/>
    <property type="match status" value="1"/>
</dbReference>
<evidence type="ECO:0000255" key="1">
    <source>
        <dbReference type="HAMAP-Rule" id="MF_00360"/>
    </source>
</evidence>
<evidence type="ECO:0000256" key="2">
    <source>
        <dbReference type="SAM" id="MobiDB-lite"/>
    </source>
</evidence>
<evidence type="ECO:0000305" key="3"/>